<proteinExistence type="evidence at transcript level"/>
<accession>B1H134</accession>
<dbReference type="EMBL" id="AAMC01004255">
    <property type="status" value="NOT_ANNOTATED_CDS"/>
    <property type="molecule type" value="Genomic_DNA"/>
</dbReference>
<dbReference type="EMBL" id="BC160452">
    <property type="protein sequence ID" value="AAI60452.1"/>
    <property type="molecule type" value="mRNA"/>
</dbReference>
<dbReference type="RefSeq" id="NP_001116922.1">
    <property type="nucleotide sequence ID" value="NM_001123450.1"/>
</dbReference>
<dbReference type="RefSeq" id="XP_012818149.1">
    <property type="nucleotide sequence ID" value="XM_012962695.3"/>
</dbReference>
<dbReference type="SMR" id="B1H134"/>
<dbReference type="FunCoup" id="B1H134">
    <property type="interactions" value="433"/>
</dbReference>
<dbReference type="STRING" id="8364.ENSXETP00000025703"/>
<dbReference type="GlyCosmos" id="B1H134">
    <property type="glycosylation" value="1 site, No reported glycans"/>
</dbReference>
<dbReference type="PaxDb" id="8364-ENSXETP00000019062"/>
<dbReference type="GeneID" id="100144692"/>
<dbReference type="KEGG" id="xtr:100144692"/>
<dbReference type="AGR" id="Xenbase:XB-GENE-490901"/>
<dbReference type="CTD" id="23767"/>
<dbReference type="Xenbase" id="XB-GENE-490901">
    <property type="gene designation" value="flrt3"/>
</dbReference>
<dbReference type="eggNOG" id="ENOG502QQBZ">
    <property type="taxonomic scope" value="Eukaryota"/>
</dbReference>
<dbReference type="HOGENOM" id="CLU_027624_0_0_1"/>
<dbReference type="InParanoid" id="B1H134"/>
<dbReference type="OMA" id="DAIHISW"/>
<dbReference type="OrthoDB" id="676979at2759"/>
<dbReference type="PhylomeDB" id="B1H134"/>
<dbReference type="TreeFam" id="TF331598"/>
<dbReference type="Reactome" id="R-XTR-5654687">
    <property type="pathway name" value="Downstream signaling of activated FGFR1"/>
</dbReference>
<dbReference type="Proteomes" id="UP000008143">
    <property type="component" value="Chromosome 5"/>
</dbReference>
<dbReference type="Bgee" id="ENSXETG00000008706">
    <property type="expression patterns" value="Expressed in embryo and 9 other cell types or tissues"/>
</dbReference>
<dbReference type="ExpressionAtlas" id="B1H134">
    <property type="expression patterns" value="baseline"/>
</dbReference>
<dbReference type="GO" id="GO:0043679">
    <property type="term" value="C:axon terminus"/>
    <property type="evidence" value="ECO:0000250"/>
    <property type="project" value="UniProtKB"/>
</dbReference>
<dbReference type="GO" id="GO:0044295">
    <property type="term" value="C:axonal growth cone"/>
    <property type="evidence" value="ECO:0000250"/>
    <property type="project" value="UniProtKB"/>
</dbReference>
<dbReference type="GO" id="GO:0005789">
    <property type="term" value="C:endoplasmic reticulum membrane"/>
    <property type="evidence" value="ECO:0007669"/>
    <property type="project" value="UniProtKB-SubCell"/>
</dbReference>
<dbReference type="GO" id="GO:0005576">
    <property type="term" value="C:extracellular region"/>
    <property type="evidence" value="ECO:0007669"/>
    <property type="project" value="UniProtKB-SubCell"/>
</dbReference>
<dbReference type="GO" id="GO:0005925">
    <property type="term" value="C:focal adhesion"/>
    <property type="evidence" value="ECO:0007669"/>
    <property type="project" value="UniProtKB-SubCell"/>
</dbReference>
<dbReference type="GO" id="GO:0032584">
    <property type="term" value="C:growth cone membrane"/>
    <property type="evidence" value="ECO:0007669"/>
    <property type="project" value="UniProtKB-SubCell"/>
</dbReference>
<dbReference type="GO" id="GO:0005886">
    <property type="term" value="C:plasma membrane"/>
    <property type="evidence" value="ECO:0000250"/>
    <property type="project" value="UniProtKB"/>
</dbReference>
<dbReference type="GO" id="GO:0097060">
    <property type="term" value="C:synaptic membrane"/>
    <property type="evidence" value="ECO:0000250"/>
    <property type="project" value="UniProtKB"/>
</dbReference>
<dbReference type="GO" id="GO:0098742">
    <property type="term" value="P:cell-cell adhesion via plasma-membrane adhesion molecules"/>
    <property type="evidence" value="ECO:0000250"/>
    <property type="project" value="UniProtKB"/>
</dbReference>
<dbReference type="GO" id="GO:0048598">
    <property type="term" value="P:embryonic morphogenesis"/>
    <property type="evidence" value="ECO:0000250"/>
    <property type="project" value="UniProtKB"/>
</dbReference>
<dbReference type="GO" id="GO:0008543">
    <property type="term" value="P:fibroblast growth factor receptor signaling pathway"/>
    <property type="evidence" value="ECO:0000250"/>
    <property type="project" value="UniProtKB"/>
</dbReference>
<dbReference type="GO" id="GO:0060322">
    <property type="term" value="P:head development"/>
    <property type="evidence" value="ECO:0000250"/>
    <property type="project" value="UniProtKB"/>
</dbReference>
<dbReference type="GO" id="GO:0007507">
    <property type="term" value="P:heart development"/>
    <property type="evidence" value="ECO:0000250"/>
    <property type="project" value="UniProtKB"/>
</dbReference>
<dbReference type="GO" id="GO:0031175">
    <property type="term" value="P:neuron projection development"/>
    <property type="evidence" value="ECO:0000250"/>
    <property type="project" value="UniProtKB"/>
</dbReference>
<dbReference type="GO" id="GO:1990138">
    <property type="term" value="P:neuron projection extension"/>
    <property type="evidence" value="ECO:0000250"/>
    <property type="project" value="UniProtKB"/>
</dbReference>
<dbReference type="GO" id="GO:0003345">
    <property type="term" value="P:proepicardium cell migration involved in pericardium morphogenesis"/>
    <property type="evidence" value="ECO:0000250"/>
    <property type="project" value="UniProtKB"/>
</dbReference>
<dbReference type="GO" id="GO:0048678">
    <property type="term" value="P:response to axon injury"/>
    <property type="evidence" value="ECO:0000250"/>
    <property type="project" value="UniProtKB"/>
</dbReference>
<dbReference type="GO" id="GO:0007416">
    <property type="term" value="P:synapse assembly"/>
    <property type="evidence" value="ECO:0000250"/>
    <property type="project" value="UniProtKB"/>
</dbReference>
<dbReference type="Gene3D" id="2.60.40.10">
    <property type="entry name" value="Immunoglobulins"/>
    <property type="match status" value="1"/>
</dbReference>
<dbReference type="Gene3D" id="3.80.10.10">
    <property type="entry name" value="Ribonuclease Inhibitor"/>
    <property type="match status" value="1"/>
</dbReference>
<dbReference type="InterPro" id="IPR000483">
    <property type="entry name" value="Cys-rich_flank_reg_C"/>
</dbReference>
<dbReference type="InterPro" id="IPR003961">
    <property type="entry name" value="FN3_dom"/>
</dbReference>
<dbReference type="InterPro" id="IPR036116">
    <property type="entry name" value="FN3_sf"/>
</dbReference>
<dbReference type="InterPro" id="IPR013783">
    <property type="entry name" value="Ig-like_fold"/>
</dbReference>
<dbReference type="InterPro" id="IPR001611">
    <property type="entry name" value="Leu-rich_rpt"/>
</dbReference>
<dbReference type="InterPro" id="IPR003591">
    <property type="entry name" value="Leu-rich_rpt_typical-subtyp"/>
</dbReference>
<dbReference type="InterPro" id="IPR032675">
    <property type="entry name" value="LRR_dom_sf"/>
</dbReference>
<dbReference type="InterPro" id="IPR000372">
    <property type="entry name" value="LRRNT"/>
</dbReference>
<dbReference type="InterPro" id="IPR050333">
    <property type="entry name" value="SLRP"/>
</dbReference>
<dbReference type="PANTHER" id="PTHR45712">
    <property type="entry name" value="AGAP008170-PA"/>
    <property type="match status" value="1"/>
</dbReference>
<dbReference type="PANTHER" id="PTHR45712:SF27">
    <property type="entry name" value="LRRNT DOMAIN-CONTAINING PROTEIN"/>
    <property type="match status" value="1"/>
</dbReference>
<dbReference type="Pfam" id="PF13855">
    <property type="entry name" value="LRR_8"/>
    <property type="match status" value="2"/>
</dbReference>
<dbReference type="SMART" id="SM00369">
    <property type="entry name" value="LRR_TYP"/>
    <property type="match status" value="7"/>
</dbReference>
<dbReference type="SMART" id="SM00082">
    <property type="entry name" value="LRRCT"/>
    <property type="match status" value="1"/>
</dbReference>
<dbReference type="SMART" id="SM00013">
    <property type="entry name" value="LRRNT"/>
    <property type="match status" value="1"/>
</dbReference>
<dbReference type="SUPFAM" id="SSF49265">
    <property type="entry name" value="Fibronectin type III"/>
    <property type="match status" value="1"/>
</dbReference>
<dbReference type="SUPFAM" id="SSF52058">
    <property type="entry name" value="L domain-like"/>
    <property type="match status" value="2"/>
</dbReference>
<dbReference type="PROSITE" id="PS50853">
    <property type="entry name" value="FN3"/>
    <property type="match status" value="1"/>
</dbReference>
<comment type="function">
    <text evidence="2 3 8">Functions in cell-cell adhesion, cell migration and axon guidance, exerting an attractive or repulsive role depending on its interaction partners (By similarity). Modulates cadherin-dependent cell-cell adhesion and cell sorting (By similarity). Plays a role in the spatial organization of brain neurons. Plays a role in vascular development. Plays a role in cell-cell adhesion via its interaction with latrophilins that are expressed at the surface of adjacent cells. Mediates axon attraction towards cells expressing ntn1. mediates axon growth cone collapse and plays a repulsive role in neuron guidance via its interaction with unc-5 family members. Plays a role in the regulation of the density of glutamaergic synapses (By similarity). Plays a role in signaling cascades downstream of fgfr1, and possibly also other fgfr family members (By similarity). Plays a role in embryonic morphogenesis, but not in embryonic patterning (PubMed:19492039).</text>
</comment>
<comment type="subunit">
    <text evidence="2">Interacts with fgfr1 and fgfr4. Interacts with rnd1, cdh1 and pcdh8. Interacts (via extracellular domain) with unc5b and unc5d (via extracellular domain) (By similarity).</text>
</comment>
<comment type="subcellular location">
    <subcellularLocation>
        <location evidence="3">Cell membrane</location>
        <topology evidence="3">Single-pass membrane protein</topology>
    </subcellularLocation>
    <subcellularLocation>
        <location evidence="3">Endoplasmic reticulum membrane</location>
    </subcellularLocation>
    <subcellularLocation>
        <location evidence="3">Cell junction</location>
        <location evidence="3">Focal adhesion</location>
    </subcellularLocation>
    <subcellularLocation>
        <location evidence="3">Secreted</location>
    </subcellularLocation>
    <subcellularLocation>
        <location evidence="3">Cell projection</location>
        <location evidence="3">Axon</location>
    </subcellularLocation>
    <subcellularLocation>
        <location evidence="3">Cell projection</location>
        <location evidence="3">Growth cone membrane</location>
    </subcellularLocation>
    <text evidence="1 3">Detected on dendritic punctae that colocalize in part with glutamaergic synapses, but not with GABAergic synapses. Proteolytic cleavage in the juxtamembrane region gives rise to a shedded ectodomain.</text>
</comment>
<comment type="developmental stage">
    <text evidence="8">Detected in blastula and gastrula, in dorsal mesoderm.</text>
</comment>
<comment type="PTM">
    <text evidence="3">N-glycosylated.</text>
</comment>
<comment type="PTM">
    <text evidence="3">Proteolytic cleavage in the juxtamembrane region gives rise to a soluble ectodomain. Cleavage is probably effected by a metalloprotease.</text>
</comment>
<gene>
    <name evidence="11" type="primary">flrt3</name>
</gene>
<organism>
    <name type="scientific">Xenopus tropicalis</name>
    <name type="common">Western clawed frog</name>
    <name type="synonym">Silurana tropicalis</name>
    <dbReference type="NCBI Taxonomy" id="8364"/>
    <lineage>
        <taxon>Eukaryota</taxon>
        <taxon>Metazoa</taxon>
        <taxon>Chordata</taxon>
        <taxon>Craniata</taxon>
        <taxon>Vertebrata</taxon>
        <taxon>Euteleostomi</taxon>
        <taxon>Amphibia</taxon>
        <taxon>Batrachia</taxon>
        <taxon>Anura</taxon>
        <taxon>Pipoidea</taxon>
        <taxon>Pipidae</taxon>
        <taxon>Xenopodinae</taxon>
        <taxon>Xenopus</taxon>
        <taxon>Silurana</taxon>
    </lineage>
</organism>
<feature type="signal peptide" evidence="4">
    <location>
        <begin position="1"/>
        <end position="28"/>
    </location>
</feature>
<feature type="chain" id="PRO_0000434520" description="Leucine-rich repeat transmembrane protein FLRT3">
    <location>
        <begin position="29"/>
        <end position="648"/>
    </location>
</feature>
<feature type="topological domain" description="Extracellular" evidence="9">
    <location>
        <begin position="29"/>
        <end position="527"/>
    </location>
</feature>
<feature type="transmembrane region" description="Helical" evidence="4">
    <location>
        <begin position="528"/>
        <end position="548"/>
    </location>
</feature>
<feature type="topological domain" description="Cytoplasmic" evidence="9">
    <location>
        <begin position="549"/>
        <end position="648"/>
    </location>
</feature>
<feature type="domain" description="LRRNT" evidence="4">
    <location>
        <begin position="30"/>
        <end position="62"/>
    </location>
</feature>
<feature type="repeat" description="LRR 1" evidence="4">
    <location>
        <begin position="58"/>
        <end position="82"/>
    </location>
</feature>
<feature type="repeat" description="LRR 2" evidence="4">
    <location>
        <begin position="83"/>
        <end position="105"/>
    </location>
</feature>
<feature type="repeat" description="LRR 3" evidence="4">
    <location>
        <begin position="107"/>
        <end position="126"/>
    </location>
</feature>
<feature type="repeat" description="LRR 4" evidence="4">
    <location>
        <begin position="127"/>
        <end position="152"/>
    </location>
</feature>
<feature type="repeat" description="LRR 5" evidence="4">
    <location>
        <begin position="154"/>
        <end position="179"/>
    </location>
</feature>
<feature type="repeat" description="LRR 6" evidence="4">
    <location>
        <begin position="181"/>
        <end position="197"/>
    </location>
</feature>
<feature type="repeat" description="LRR 7" evidence="4">
    <location>
        <begin position="198"/>
        <end position="223"/>
    </location>
</feature>
<feature type="repeat" description="LRR 8" evidence="4">
    <location>
        <begin position="225"/>
        <end position="246"/>
    </location>
</feature>
<feature type="repeat" description="LRR 9" evidence="4">
    <location>
        <begin position="247"/>
        <end position="269"/>
    </location>
</feature>
<feature type="repeat" description="LRR 10" evidence="4">
    <location>
        <begin position="270"/>
        <end position="293"/>
    </location>
</feature>
<feature type="domain" description="LRRCT" evidence="4">
    <location>
        <begin position="305"/>
        <end position="356"/>
    </location>
</feature>
<feature type="domain" description="Fibronectin type-III" evidence="5">
    <location>
        <begin position="409"/>
        <end position="503"/>
    </location>
</feature>
<feature type="region of interest" description="Disordered" evidence="7">
    <location>
        <begin position="624"/>
        <end position="648"/>
    </location>
</feature>
<feature type="compositionally biased region" description="Low complexity" evidence="7">
    <location>
        <begin position="624"/>
        <end position="633"/>
    </location>
</feature>
<feature type="glycosylation site" description="N-linked (GlcNAc...) asparagine" evidence="6">
    <location>
        <position position="226"/>
    </location>
</feature>
<feature type="disulfide bond" evidence="3">
    <location>
        <begin position="31"/>
        <end position="37"/>
    </location>
</feature>
<feature type="disulfide bond" evidence="3">
    <location>
        <begin position="35"/>
        <end position="44"/>
    </location>
</feature>
<feature type="disulfide bond" evidence="3">
    <location>
        <begin position="309"/>
        <end position="334"/>
    </location>
</feature>
<sequence>MSTETWNLFVAWAQLLLLFRISPQYVNAKPCPSVCRCDGGFIYCNDRDLTSIPSGIPDDATTLYLQNNQINNAGIPSDLRGLDKVERIYLYRNSLDEFPINLPKNVKELHLQENNIRTITYDALSQIPSIEELHLDDNSVSAVSIEDGAFRDNIFLRLLFLSRNHLSTIPWGLPRTIEELRLDDNRISTIAEISLQDLTNLKRLVLDGNLLNNNGLGERVFMNLINLTELSLVRNSLTSPPANLPGTNLRKLYLQENHMNYVPPNAFADLTQLYRLDMSNNNITALPQGIFDDLDNLTQLFLRNNPWYCGCKMKWVRDWLQSLPSKVNVRGLMCQAPERVRGMTIKDLNKELFDCKDRIGSNTIHVTTTVLNSLLPAQGQWPVPVTKQPEIRPPDINKIFRTTPIPVKKIITIQVKSITTETIYISWKVALPMTALRLSWQLGHSPVFGSITETIVTGDRTEYLLTALEPESPYRICMVPMETGNIYLSDETPVCIETETAPLKMYNPTTTLNREQEKEPYKNSSLPLAAIIGGAVALVAITLLALVCWYVHRNGSLFSRNCAYSKGRRRKDDYAEAGTKKDNSILEIRETSFPMIPINSDPISKEEFIIHTIFPPNGVSLYKNSHSESSSNRSYRDSGIPDSDHSHS</sequence>
<evidence type="ECO:0000250" key="1">
    <source>
        <dbReference type="UniProtKB" id="B1H234"/>
    </source>
</evidence>
<evidence type="ECO:0000250" key="2">
    <source>
        <dbReference type="UniProtKB" id="Q70AK3"/>
    </source>
</evidence>
<evidence type="ECO:0000250" key="3">
    <source>
        <dbReference type="UniProtKB" id="Q8BGT1"/>
    </source>
</evidence>
<evidence type="ECO:0000255" key="4"/>
<evidence type="ECO:0000255" key="5">
    <source>
        <dbReference type="PROSITE-ProRule" id="PRU00316"/>
    </source>
</evidence>
<evidence type="ECO:0000255" key="6">
    <source>
        <dbReference type="PROSITE-ProRule" id="PRU00498"/>
    </source>
</evidence>
<evidence type="ECO:0000256" key="7">
    <source>
        <dbReference type="SAM" id="MobiDB-lite"/>
    </source>
</evidence>
<evidence type="ECO:0000269" key="8">
    <source>
    </source>
</evidence>
<evidence type="ECO:0000305" key="9"/>
<evidence type="ECO:0000312" key="10">
    <source>
        <dbReference type="EMBL" id="AAI60452.1"/>
    </source>
</evidence>
<evidence type="ECO:0000312" key="11">
    <source>
        <dbReference type="Xenbase" id="XB-GENE-490901"/>
    </source>
</evidence>
<name>FLRT3_XENTR</name>
<protein>
    <recommendedName>
        <fullName>Leucine-rich repeat transmembrane protein FLRT3</fullName>
    </recommendedName>
    <alternativeName>
        <fullName>Fibronectin-like domain-containing leucine-rich transmembrane protein 3</fullName>
    </alternativeName>
</protein>
<reference key="1">
    <citation type="journal article" date="2010" name="Science">
        <title>The genome of the Western clawed frog Xenopus tropicalis.</title>
        <authorList>
            <person name="Hellsten U."/>
            <person name="Harland R.M."/>
            <person name="Gilchrist M.J."/>
            <person name="Hendrix D."/>
            <person name="Jurka J."/>
            <person name="Kapitonov V."/>
            <person name="Ovcharenko I."/>
            <person name="Putnam N.H."/>
            <person name="Shu S."/>
            <person name="Taher L."/>
            <person name="Blitz I.L."/>
            <person name="Blumberg B."/>
            <person name="Dichmann D.S."/>
            <person name="Dubchak I."/>
            <person name="Amaya E."/>
            <person name="Detter J.C."/>
            <person name="Fletcher R."/>
            <person name="Gerhard D.S."/>
            <person name="Goodstein D."/>
            <person name="Graves T."/>
            <person name="Grigoriev I.V."/>
            <person name="Grimwood J."/>
            <person name="Kawashima T."/>
            <person name="Lindquist E."/>
            <person name="Lucas S.M."/>
            <person name="Mead P.E."/>
            <person name="Mitros T."/>
            <person name="Ogino H."/>
            <person name="Ohta Y."/>
            <person name="Poliakov A.V."/>
            <person name="Pollet N."/>
            <person name="Robert J."/>
            <person name="Salamov A."/>
            <person name="Sater A.K."/>
            <person name="Schmutz J."/>
            <person name="Terry A."/>
            <person name="Vize P.D."/>
            <person name="Warren W.C."/>
            <person name="Wells D."/>
            <person name="Wills A."/>
            <person name="Wilson R.K."/>
            <person name="Zimmerman L.B."/>
            <person name="Zorn A.M."/>
            <person name="Grainger R."/>
            <person name="Grammer T."/>
            <person name="Khokha M.K."/>
            <person name="Richardson P.M."/>
            <person name="Rokhsar D.S."/>
        </authorList>
    </citation>
    <scope>NUCLEOTIDE SEQUENCE [LARGE SCALE GENOMIC DNA]</scope>
</reference>
<reference key="2">
    <citation type="submission" date="2008-03" db="EMBL/GenBank/DDBJ databases">
        <authorList>
            <consortium name="NIH - Xenopus Gene Collection (XGC) project"/>
        </authorList>
    </citation>
    <scope>NUCLEOTIDE SEQUENCE [LARGE SCALE MRNA]</scope>
    <source>
        <tissue evidence="10">Embryo</tissue>
    </source>
</reference>
<reference key="3">
    <citation type="journal article" date="2009" name="PLoS ONE">
        <title>Unc5B interacts with FLRT3 and Rnd1 to modulate cell adhesion in Xenopus embryos.</title>
        <authorList>
            <person name="Karaulanov E."/>
            <person name="Boettcher R.T."/>
            <person name="Stannek P."/>
            <person name="Wu W."/>
            <person name="Rau M."/>
            <person name="Ogata S."/>
            <person name="Cho K.W.Y."/>
            <person name="Niehrs C."/>
        </authorList>
    </citation>
    <scope>FUNCTION</scope>
    <scope>DEVELOPMENTAL STAGE</scope>
</reference>
<keyword id="KW-0130">Cell adhesion</keyword>
<keyword id="KW-0965">Cell junction</keyword>
<keyword id="KW-1003">Cell membrane</keyword>
<keyword id="KW-0966">Cell projection</keyword>
<keyword id="KW-0217">Developmental protein</keyword>
<keyword id="KW-1015">Disulfide bond</keyword>
<keyword id="KW-0256">Endoplasmic reticulum</keyword>
<keyword id="KW-0325">Glycoprotein</keyword>
<keyword id="KW-0433">Leucine-rich repeat</keyword>
<keyword id="KW-0472">Membrane</keyword>
<keyword id="KW-1185">Reference proteome</keyword>
<keyword id="KW-0677">Repeat</keyword>
<keyword id="KW-0964">Secreted</keyword>
<keyword id="KW-0732">Signal</keyword>
<keyword id="KW-0812">Transmembrane</keyword>
<keyword id="KW-1133">Transmembrane helix</keyword>